<keyword id="KW-0066">ATP synthesis</keyword>
<keyword id="KW-0997">Cell inner membrane</keyword>
<keyword id="KW-1003">Cell membrane</keyword>
<keyword id="KW-0138">CF(0)</keyword>
<keyword id="KW-0375">Hydrogen ion transport</keyword>
<keyword id="KW-0406">Ion transport</keyword>
<keyword id="KW-0472">Membrane</keyword>
<keyword id="KW-1185">Reference proteome</keyword>
<keyword id="KW-0812">Transmembrane</keyword>
<keyword id="KW-1133">Transmembrane helix</keyword>
<keyword id="KW-0813">Transport</keyword>
<dbReference type="EMBL" id="CP000482">
    <property type="protein sequence ID" value="ABK98477.1"/>
    <property type="molecule type" value="Genomic_DNA"/>
</dbReference>
<dbReference type="RefSeq" id="WP_011734789.1">
    <property type="nucleotide sequence ID" value="NC_008609.1"/>
</dbReference>
<dbReference type="SMR" id="A1AMA7"/>
<dbReference type="STRING" id="338966.Ppro_0848"/>
<dbReference type="KEGG" id="ppd:Ppro_0848"/>
<dbReference type="eggNOG" id="COG0356">
    <property type="taxonomic scope" value="Bacteria"/>
</dbReference>
<dbReference type="HOGENOM" id="CLU_041018_2_5_7"/>
<dbReference type="OrthoDB" id="9789241at2"/>
<dbReference type="Proteomes" id="UP000006732">
    <property type="component" value="Chromosome"/>
</dbReference>
<dbReference type="GO" id="GO:0005886">
    <property type="term" value="C:plasma membrane"/>
    <property type="evidence" value="ECO:0007669"/>
    <property type="project" value="UniProtKB-SubCell"/>
</dbReference>
<dbReference type="GO" id="GO:0045259">
    <property type="term" value="C:proton-transporting ATP synthase complex"/>
    <property type="evidence" value="ECO:0007669"/>
    <property type="project" value="UniProtKB-KW"/>
</dbReference>
<dbReference type="GO" id="GO:0046933">
    <property type="term" value="F:proton-transporting ATP synthase activity, rotational mechanism"/>
    <property type="evidence" value="ECO:0007669"/>
    <property type="project" value="UniProtKB-UniRule"/>
</dbReference>
<dbReference type="GO" id="GO:0042777">
    <property type="term" value="P:proton motive force-driven plasma membrane ATP synthesis"/>
    <property type="evidence" value="ECO:0007669"/>
    <property type="project" value="TreeGrafter"/>
</dbReference>
<dbReference type="CDD" id="cd00310">
    <property type="entry name" value="ATP-synt_Fo_a_6"/>
    <property type="match status" value="1"/>
</dbReference>
<dbReference type="Gene3D" id="1.20.120.220">
    <property type="entry name" value="ATP synthase, F0 complex, subunit A"/>
    <property type="match status" value="1"/>
</dbReference>
<dbReference type="HAMAP" id="MF_01393">
    <property type="entry name" value="ATP_synth_a_bact"/>
    <property type="match status" value="1"/>
</dbReference>
<dbReference type="InterPro" id="IPR045082">
    <property type="entry name" value="ATP_syn_F0_a_bact/chloroplast"/>
</dbReference>
<dbReference type="InterPro" id="IPR000568">
    <property type="entry name" value="ATP_synth_F0_asu"/>
</dbReference>
<dbReference type="InterPro" id="IPR023011">
    <property type="entry name" value="ATP_synth_F0_asu_AS"/>
</dbReference>
<dbReference type="InterPro" id="IPR035908">
    <property type="entry name" value="F0_ATP_A_sf"/>
</dbReference>
<dbReference type="NCBIfam" id="TIGR01131">
    <property type="entry name" value="ATP_synt_6_or_A"/>
    <property type="match status" value="1"/>
</dbReference>
<dbReference type="NCBIfam" id="NF009954">
    <property type="entry name" value="PRK13420.1"/>
    <property type="match status" value="1"/>
</dbReference>
<dbReference type="PANTHER" id="PTHR42823">
    <property type="entry name" value="ATP SYNTHASE SUBUNIT A, CHLOROPLASTIC"/>
    <property type="match status" value="1"/>
</dbReference>
<dbReference type="PANTHER" id="PTHR42823:SF3">
    <property type="entry name" value="ATP SYNTHASE SUBUNIT A, CHLOROPLASTIC"/>
    <property type="match status" value="1"/>
</dbReference>
<dbReference type="Pfam" id="PF00119">
    <property type="entry name" value="ATP-synt_A"/>
    <property type="match status" value="1"/>
</dbReference>
<dbReference type="PRINTS" id="PR00123">
    <property type="entry name" value="ATPASEA"/>
</dbReference>
<dbReference type="SUPFAM" id="SSF81336">
    <property type="entry name" value="F1F0 ATP synthase subunit A"/>
    <property type="match status" value="1"/>
</dbReference>
<dbReference type="PROSITE" id="PS00449">
    <property type="entry name" value="ATPASE_A"/>
    <property type="match status" value="1"/>
</dbReference>
<reference key="1">
    <citation type="submission" date="2006-10" db="EMBL/GenBank/DDBJ databases">
        <title>Complete sequence of chromosome of Pelobacter propionicus DSM 2379.</title>
        <authorList>
            <consortium name="US DOE Joint Genome Institute"/>
            <person name="Copeland A."/>
            <person name="Lucas S."/>
            <person name="Lapidus A."/>
            <person name="Barry K."/>
            <person name="Detter J.C."/>
            <person name="Glavina del Rio T."/>
            <person name="Hammon N."/>
            <person name="Israni S."/>
            <person name="Dalin E."/>
            <person name="Tice H."/>
            <person name="Pitluck S."/>
            <person name="Saunders E."/>
            <person name="Brettin T."/>
            <person name="Bruce D."/>
            <person name="Han C."/>
            <person name="Tapia R."/>
            <person name="Schmutz J."/>
            <person name="Larimer F."/>
            <person name="Land M."/>
            <person name="Hauser L."/>
            <person name="Kyrpides N."/>
            <person name="Kim E."/>
            <person name="Lovley D."/>
            <person name="Richardson P."/>
        </authorList>
    </citation>
    <scope>NUCLEOTIDE SEQUENCE [LARGE SCALE GENOMIC DNA]</scope>
    <source>
        <strain>DSM 2379 / NBRC 103807 / OttBd1</strain>
    </source>
</reference>
<sequence>MLETTQALFHLGPLAVGTTVVTTWGIMVVLSLGAWLASRRLRLDPGPFQVALEGVVQTIRAAVEEVVPRRADTVFPFVATLWLFIGIANLSSLIPRVHSPTADLSATTALALLVFFSVHWFGIRIQGLRPYLRHYLSPSPFLLPFHVIGEITRTLALAVRLFGNMMSLETAALLVLLVAGLFAPIPLLMLHIVEALVQAYIFGMLTLVYIAGAIQSLEARRSPKEEET</sequence>
<name>ATP62_PELPD</name>
<accession>A1AMA7</accession>
<evidence type="ECO:0000255" key="1">
    <source>
        <dbReference type="HAMAP-Rule" id="MF_01393"/>
    </source>
</evidence>
<protein>
    <recommendedName>
        <fullName evidence="1">ATP synthase subunit a 2</fullName>
    </recommendedName>
    <alternativeName>
        <fullName evidence="1">ATP synthase F0 sector subunit a 2</fullName>
    </alternativeName>
    <alternativeName>
        <fullName evidence="1">F-ATPase subunit 6 2</fullName>
    </alternativeName>
</protein>
<gene>
    <name evidence="1" type="primary">atpB2</name>
    <name type="ordered locus">Ppro_0848</name>
</gene>
<comment type="function">
    <text evidence="1">Key component of the proton channel; it plays a direct role in the translocation of protons across the membrane.</text>
</comment>
<comment type="subunit">
    <text evidence="1">F-type ATPases have 2 components, CF(1) - the catalytic core - and CF(0) - the membrane proton channel. CF(1) has five subunits: alpha(3), beta(3), gamma(1), delta(1), epsilon(1). CF(0) has three main subunits: a(1), b(2) and c(9-12). The alpha and beta chains form an alternating ring which encloses part of the gamma chain. CF(1) is attached to CF(0) by a central stalk formed by the gamma and epsilon chains, while a peripheral stalk is formed by the delta and b chains.</text>
</comment>
<comment type="subcellular location">
    <subcellularLocation>
        <location evidence="1">Cell inner membrane</location>
        <topology evidence="1">Multi-pass membrane protein</topology>
    </subcellularLocation>
</comment>
<comment type="similarity">
    <text evidence="1">Belongs to the ATPase A chain family.</text>
</comment>
<feature type="chain" id="PRO_0000362369" description="ATP synthase subunit a 2">
    <location>
        <begin position="1"/>
        <end position="228"/>
    </location>
</feature>
<feature type="transmembrane region" description="Helical" evidence="1">
    <location>
        <begin position="16"/>
        <end position="36"/>
    </location>
</feature>
<feature type="transmembrane region" description="Helical" evidence="1">
    <location>
        <begin position="74"/>
        <end position="94"/>
    </location>
</feature>
<feature type="transmembrane region" description="Helical" evidence="1">
    <location>
        <begin position="103"/>
        <end position="123"/>
    </location>
</feature>
<feature type="transmembrane region" description="Helical" evidence="1">
    <location>
        <begin position="139"/>
        <end position="159"/>
    </location>
</feature>
<feature type="transmembrane region" description="Helical" evidence="1">
    <location>
        <begin position="173"/>
        <end position="193"/>
    </location>
</feature>
<feature type="transmembrane region" description="Helical" evidence="1">
    <location>
        <begin position="194"/>
        <end position="214"/>
    </location>
</feature>
<organism>
    <name type="scientific">Pelobacter propionicus (strain DSM 2379 / NBRC 103807 / OttBd1)</name>
    <dbReference type="NCBI Taxonomy" id="338966"/>
    <lineage>
        <taxon>Bacteria</taxon>
        <taxon>Pseudomonadati</taxon>
        <taxon>Thermodesulfobacteriota</taxon>
        <taxon>Desulfuromonadia</taxon>
        <taxon>Desulfuromonadales</taxon>
        <taxon>Desulfuromonadaceae</taxon>
        <taxon>Pelobacter</taxon>
    </lineage>
</organism>
<proteinExistence type="inferred from homology"/>